<keyword id="KW-1003">Cell membrane</keyword>
<keyword id="KW-0472">Membrane</keyword>
<keyword id="KW-0653">Protein transport</keyword>
<keyword id="KW-1185">Reference proteome</keyword>
<keyword id="KW-0811">Translocation</keyword>
<keyword id="KW-0812">Transmembrane</keyword>
<keyword id="KW-1133">Transmembrane helix</keyword>
<keyword id="KW-0813">Transport</keyword>
<name>TATA_MYCPA</name>
<evidence type="ECO:0000255" key="1">
    <source>
        <dbReference type="HAMAP-Rule" id="MF_00236"/>
    </source>
</evidence>
<evidence type="ECO:0000256" key="2">
    <source>
        <dbReference type="SAM" id="MobiDB-lite"/>
    </source>
</evidence>
<gene>
    <name evidence="1" type="primary">tatA</name>
    <name type="ordered locus">MAP_1830c</name>
</gene>
<proteinExistence type="inferred from homology"/>
<comment type="function">
    <text evidence="1">Part of the twin-arginine translocation (Tat) system that transports large folded proteins containing a characteristic twin-arginine motif in their signal peptide across membranes. TatA could form the protein-conducting channel of the Tat system.</text>
</comment>
<comment type="subunit">
    <text evidence="1">The Tat system comprises two distinct complexes: a TatABC complex, containing multiple copies of TatA, TatB and TatC subunits, and a separate TatA complex, containing only TatA subunits. Substrates initially bind to the TatABC complex, which probably triggers association of the separate TatA complex to form the active translocon.</text>
</comment>
<comment type="subcellular location">
    <subcellularLocation>
        <location evidence="1">Cell membrane</location>
        <topology evidence="1">Single-pass membrane protein</topology>
    </subcellularLocation>
</comment>
<comment type="similarity">
    <text evidence="1">Belongs to the TatA/E family.</text>
</comment>
<reference key="1">
    <citation type="journal article" date="2005" name="Proc. Natl. Acad. Sci. U.S.A.">
        <title>The complete genome sequence of Mycobacterium avium subspecies paratuberculosis.</title>
        <authorList>
            <person name="Li L."/>
            <person name="Bannantine J.P."/>
            <person name="Zhang Q."/>
            <person name="Amonsin A."/>
            <person name="May B.J."/>
            <person name="Alt D."/>
            <person name="Banerji N."/>
            <person name="Kanjilal S."/>
            <person name="Kapur V."/>
        </authorList>
    </citation>
    <scope>NUCLEOTIDE SEQUENCE [LARGE SCALE GENOMIC DNA]</scope>
    <source>
        <strain>ATCC BAA-968 / K-10</strain>
    </source>
</reference>
<sequence>MGSLSPWHWAILAVVVILLFGAKKLPDAARSLGKSMRIFKSELREMQSENKTETSALGAQSESSAANPTPVQSQRVDPPAPSEQGHSEARPAS</sequence>
<accession>Q73YX3</accession>
<organism>
    <name type="scientific">Mycolicibacterium paratuberculosis (strain ATCC BAA-968 / K-10)</name>
    <name type="common">Mycobacterium paratuberculosis</name>
    <dbReference type="NCBI Taxonomy" id="262316"/>
    <lineage>
        <taxon>Bacteria</taxon>
        <taxon>Bacillati</taxon>
        <taxon>Actinomycetota</taxon>
        <taxon>Actinomycetes</taxon>
        <taxon>Mycobacteriales</taxon>
        <taxon>Mycobacteriaceae</taxon>
        <taxon>Mycobacterium</taxon>
        <taxon>Mycobacterium avium complex (MAC)</taxon>
    </lineage>
</organism>
<feature type="chain" id="PRO_1000044400" description="Sec-independent protein translocase protein TatA">
    <location>
        <begin position="1"/>
        <end position="93"/>
    </location>
</feature>
<feature type="transmembrane region" description="Helical" evidence="1">
    <location>
        <begin position="1"/>
        <end position="21"/>
    </location>
</feature>
<feature type="region of interest" description="Disordered" evidence="2">
    <location>
        <begin position="45"/>
        <end position="93"/>
    </location>
</feature>
<feature type="compositionally biased region" description="Polar residues" evidence="2">
    <location>
        <begin position="53"/>
        <end position="75"/>
    </location>
</feature>
<protein>
    <recommendedName>
        <fullName evidence="1">Sec-independent protein translocase protein TatA</fullName>
    </recommendedName>
</protein>
<dbReference type="EMBL" id="AE016958">
    <property type="protein sequence ID" value="AAS04147.1"/>
    <property type="molecule type" value="Genomic_DNA"/>
</dbReference>
<dbReference type="RefSeq" id="WP_003878076.1">
    <property type="nucleotide sequence ID" value="NZ_CP106873.1"/>
</dbReference>
<dbReference type="SMR" id="Q73YX3"/>
<dbReference type="STRING" id="262316.MAP_1830c"/>
<dbReference type="GeneID" id="75269953"/>
<dbReference type="KEGG" id="mpa:MAP_1830c"/>
<dbReference type="eggNOG" id="COG1826">
    <property type="taxonomic scope" value="Bacteria"/>
</dbReference>
<dbReference type="HOGENOM" id="CLU_086034_4_2_11"/>
<dbReference type="Proteomes" id="UP000000580">
    <property type="component" value="Chromosome"/>
</dbReference>
<dbReference type="GO" id="GO:0033281">
    <property type="term" value="C:TAT protein transport complex"/>
    <property type="evidence" value="ECO:0007669"/>
    <property type="project" value="UniProtKB-UniRule"/>
</dbReference>
<dbReference type="GO" id="GO:0008320">
    <property type="term" value="F:protein transmembrane transporter activity"/>
    <property type="evidence" value="ECO:0007669"/>
    <property type="project" value="UniProtKB-UniRule"/>
</dbReference>
<dbReference type="GO" id="GO:0043953">
    <property type="term" value="P:protein transport by the Tat complex"/>
    <property type="evidence" value="ECO:0007669"/>
    <property type="project" value="UniProtKB-UniRule"/>
</dbReference>
<dbReference type="Gene3D" id="1.20.5.3310">
    <property type="match status" value="1"/>
</dbReference>
<dbReference type="HAMAP" id="MF_00236">
    <property type="entry name" value="TatA_E"/>
    <property type="match status" value="1"/>
</dbReference>
<dbReference type="InterPro" id="IPR003369">
    <property type="entry name" value="TatA/B/E"/>
</dbReference>
<dbReference type="InterPro" id="IPR006312">
    <property type="entry name" value="TatA/E"/>
</dbReference>
<dbReference type="NCBIfam" id="NF001854">
    <property type="entry name" value="PRK00575.1"/>
    <property type="match status" value="1"/>
</dbReference>
<dbReference type="NCBIfam" id="TIGR01411">
    <property type="entry name" value="tatAE"/>
    <property type="match status" value="1"/>
</dbReference>
<dbReference type="PANTHER" id="PTHR42982">
    <property type="entry name" value="SEC-INDEPENDENT PROTEIN TRANSLOCASE PROTEIN TATA"/>
    <property type="match status" value="1"/>
</dbReference>
<dbReference type="PANTHER" id="PTHR42982:SF8">
    <property type="entry name" value="SEC-INDEPENDENT PROTEIN TRANSLOCASE PROTEIN TATA"/>
    <property type="match status" value="1"/>
</dbReference>
<dbReference type="Pfam" id="PF02416">
    <property type="entry name" value="TatA_B_E"/>
    <property type="match status" value="1"/>
</dbReference>